<protein>
    <recommendedName>
        <fullName evidence="1">Large ribosomal subunit protein uL6</fullName>
    </recommendedName>
    <alternativeName>
        <fullName evidence="2">50S ribosomal protein L6</fullName>
    </alternativeName>
</protein>
<feature type="chain" id="PRO_1000144052" description="Large ribosomal subunit protein uL6">
    <location>
        <begin position="1"/>
        <end position="179"/>
    </location>
</feature>
<dbReference type="EMBL" id="AP009493">
    <property type="protein sequence ID" value="BAG19648.1"/>
    <property type="molecule type" value="Genomic_DNA"/>
</dbReference>
<dbReference type="RefSeq" id="WP_003966946.1">
    <property type="nucleotide sequence ID" value="NC_010572.1"/>
</dbReference>
<dbReference type="SMR" id="B1W3Z2"/>
<dbReference type="GeneID" id="97760385"/>
<dbReference type="KEGG" id="sgr:SGR_2819"/>
<dbReference type="eggNOG" id="COG0097">
    <property type="taxonomic scope" value="Bacteria"/>
</dbReference>
<dbReference type="HOGENOM" id="CLU_065464_1_2_11"/>
<dbReference type="Proteomes" id="UP000001685">
    <property type="component" value="Chromosome"/>
</dbReference>
<dbReference type="GO" id="GO:0022625">
    <property type="term" value="C:cytosolic large ribosomal subunit"/>
    <property type="evidence" value="ECO:0007669"/>
    <property type="project" value="TreeGrafter"/>
</dbReference>
<dbReference type="GO" id="GO:0019843">
    <property type="term" value="F:rRNA binding"/>
    <property type="evidence" value="ECO:0007669"/>
    <property type="project" value="UniProtKB-UniRule"/>
</dbReference>
<dbReference type="GO" id="GO:0003735">
    <property type="term" value="F:structural constituent of ribosome"/>
    <property type="evidence" value="ECO:0007669"/>
    <property type="project" value="InterPro"/>
</dbReference>
<dbReference type="GO" id="GO:0002181">
    <property type="term" value="P:cytoplasmic translation"/>
    <property type="evidence" value="ECO:0007669"/>
    <property type="project" value="TreeGrafter"/>
</dbReference>
<dbReference type="FunFam" id="3.90.930.12:FF:000001">
    <property type="entry name" value="50S ribosomal protein L6"/>
    <property type="match status" value="1"/>
</dbReference>
<dbReference type="FunFam" id="3.90.930.12:FF:000002">
    <property type="entry name" value="50S ribosomal protein L6"/>
    <property type="match status" value="1"/>
</dbReference>
<dbReference type="Gene3D" id="3.90.930.12">
    <property type="entry name" value="Ribosomal protein L6, alpha-beta domain"/>
    <property type="match status" value="2"/>
</dbReference>
<dbReference type="HAMAP" id="MF_01365_B">
    <property type="entry name" value="Ribosomal_uL6_B"/>
    <property type="match status" value="1"/>
</dbReference>
<dbReference type="InterPro" id="IPR000702">
    <property type="entry name" value="Ribosomal_uL6-like"/>
</dbReference>
<dbReference type="InterPro" id="IPR036789">
    <property type="entry name" value="Ribosomal_uL6-like_a/b-dom_sf"/>
</dbReference>
<dbReference type="InterPro" id="IPR020040">
    <property type="entry name" value="Ribosomal_uL6_a/b-dom"/>
</dbReference>
<dbReference type="InterPro" id="IPR019906">
    <property type="entry name" value="Ribosomal_uL6_bac-type"/>
</dbReference>
<dbReference type="InterPro" id="IPR002358">
    <property type="entry name" value="Ribosomal_uL6_CS"/>
</dbReference>
<dbReference type="NCBIfam" id="TIGR03654">
    <property type="entry name" value="L6_bact"/>
    <property type="match status" value="1"/>
</dbReference>
<dbReference type="PANTHER" id="PTHR11655">
    <property type="entry name" value="60S/50S RIBOSOMAL PROTEIN L6/L9"/>
    <property type="match status" value="1"/>
</dbReference>
<dbReference type="PANTHER" id="PTHR11655:SF14">
    <property type="entry name" value="LARGE RIBOSOMAL SUBUNIT PROTEIN UL6M"/>
    <property type="match status" value="1"/>
</dbReference>
<dbReference type="Pfam" id="PF00347">
    <property type="entry name" value="Ribosomal_L6"/>
    <property type="match status" value="2"/>
</dbReference>
<dbReference type="PIRSF" id="PIRSF002162">
    <property type="entry name" value="Ribosomal_L6"/>
    <property type="match status" value="1"/>
</dbReference>
<dbReference type="PRINTS" id="PR00059">
    <property type="entry name" value="RIBOSOMALL6"/>
</dbReference>
<dbReference type="SUPFAM" id="SSF56053">
    <property type="entry name" value="Ribosomal protein L6"/>
    <property type="match status" value="2"/>
</dbReference>
<dbReference type="PROSITE" id="PS00525">
    <property type="entry name" value="RIBOSOMAL_L6_1"/>
    <property type="match status" value="1"/>
</dbReference>
<reference key="1">
    <citation type="journal article" date="2008" name="J. Bacteriol.">
        <title>Genome sequence of the streptomycin-producing microorganism Streptomyces griseus IFO 13350.</title>
        <authorList>
            <person name="Ohnishi Y."/>
            <person name="Ishikawa J."/>
            <person name="Hara H."/>
            <person name="Suzuki H."/>
            <person name="Ikenoya M."/>
            <person name="Ikeda H."/>
            <person name="Yamashita A."/>
            <person name="Hattori M."/>
            <person name="Horinouchi S."/>
        </authorList>
    </citation>
    <scope>NUCLEOTIDE SEQUENCE [LARGE SCALE GENOMIC DNA]</scope>
    <source>
        <strain>JCM 4626 / CBS 651.72 / NBRC 13350 / KCC S-0626 / ISP 5235</strain>
    </source>
</reference>
<comment type="function">
    <text evidence="1">This protein binds to the 23S rRNA, and is important in its secondary structure. It is located near the subunit interface in the base of the L7/L12 stalk, and near the tRNA binding site of the peptidyltransferase center.</text>
</comment>
<comment type="subunit">
    <text evidence="1">Part of the 50S ribosomal subunit.</text>
</comment>
<comment type="similarity">
    <text evidence="1">Belongs to the universal ribosomal protein uL6 family.</text>
</comment>
<accession>B1W3Z2</accession>
<sequence length="179" mass="18994">MSRIGKLPIQVPAGVDVTIDGRTVAVKGPKGSLTHTVAAPIEVSKGEDGVLNVTRPNDERQNKALHGLSRTLVANMITGVTAGYSKALEISGVGYRVQAKGSNLEFALGYSHPILIEAPEGITFKVESPTKLSVEGIDKQKVGEVAANIRKLRKPDPYKAKGVKYAGEVIRRKVGKAGK</sequence>
<proteinExistence type="inferred from homology"/>
<gene>
    <name evidence="1" type="primary">rplF</name>
    <name type="ordered locus">SGR_2819</name>
</gene>
<organism>
    <name type="scientific">Streptomyces griseus subsp. griseus (strain JCM 4626 / CBS 651.72 / NBRC 13350 / KCC S-0626 / ISP 5235)</name>
    <dbReference type="NCBI Taxonomy" id="455632"/>
    <lineage>
        <taxon>Bacteria</taxon>
        <taxon>Bacillati</taxon>
        <taxon>Actinomycetota</taxon>
        <taxon>Actinomycetes</taxon>
        <taxon>Kitasatosporales</taxon>
        <taxon>Streptomycetaceae</taxon>
        <taxon>Streptomyces</taxon>
    </lineage>
</organism>
<evidence type="ECO:0000255" key="1">
    <source>
        <dbReference type="HAMAP-Rule" id="MF_01365"/>
    </source>
</evidence>
<evidence type="ECO:0000305" key="2"/>
<name>RL6_STRGG</name>
<keyword id="KW-0687">Ribonucleoprotein</keyword>
<keyword id="KW-0689">Ribosomal protein</keyword>
<keyword id="KW-0694">RNA-binding</keyword>
<keyword id="KW-0699">rRNA-binding</keyword>